<feature type="chain" id="PRO_0000226778" description="REST corepressor 2">
    <location>
        <begin position="1"/>
        <end position="523"/>
    </location>
</feature>
<feature type="domain" description="ELM2" evidence="4">
    <location>
        <begin position="44"/>
        <end position="129"/>
    </location>
</feature>
<feature type="domain" description="SANT 1" evidence="5">
    <location>
        <begin position="130"/>
        <end position="181"/>
    </location>
</feature>
<feature type="domain" description="SANT 2" evidence="5">
    <location>
        <begin position="327"/>
        <end position="378"/>
    </location>
</feature>
<feature type="region of interest" description="Disordered" evidence="6">
    <location>
        <begin position="1"/>
        <end position="43"/>
    </location>
</feature>
<feature type="region of interest" description="Disordered" evidence="6">
    <location>
        <begin position="185"/>
        <end position="265"/>
    </location>
</feature>
<feature type="region of interest" description="Disordered" evidence="6">
    <location>
        <begin position="387"/>
        <end position="523"/>
    </location>
</feature>
<feature type="coiled-coil region" evidence="3">
    <location>
        <begin position="283"/>
        <end position="314"/>
    </location>
</feature>
<feature type="compositionally biased region" description="Basic and acidic residues" evidence="6">
    <location>
        <begin position="30"/>
        <end position="43"/>
    </location>
</feature>
<feature type="compositionally biased region" description="Basic residues" evidence="6">
    <location>
        <begin position="248"/>
        <end position="260"/>
    </location>
</feature>
<feature type="compositionally biased region" description="Pro residues" evidence="6">
    <location>
        <begin position="432"/>
        <end position="459"/>
    </location>
</feature>
<feature type="compositionally biased region" description="Low complexity" evidence="6">
    <location>
        <begin position="460"/>
        <end position="482"/>
    </location>
</feature>
<feature type="modified residue" description="Phosphoserine" evidence="2">
    <location>
        <position position="31"/>
    </location>
</feature>
<feature type="modified residue" description="Phosphoserine" evidence="2">
    <location>
        <position position="35"/>
    </location>
</feature>
<feature type="modified residue" description="Phosphoserine" evidence="2">
    <location>
        <position position="36"/>
    </location>
</feature>
<feature type="modified residue" description="Phosphoserine" evidence="2">
    <location>
        <position position="63"/>
    </location>
</feature>
<feature type="modified residue" description="Phosphoserine" evidence="8">
    <location>
        <position position="202"/>
    </location>
</feature>
<feature type="modified residue" description="Asymmetric dimethylarginine" evidence="1">
    <location>
        <position position="479"/>
    </location>
</feature>
<feature type="cross-link" description="Glycyl lysine isopeptide (Lys-Gly) (interchain with G-Cter in SUMO2)" evidence="2">
    <location>
        <position position="88"/>
    </location>
</feature>
<comment type="function">
    <text evidence="7">May act as a component of a corepressor complex that represses transcription.</text>
</comment>
<comment type="subcellular location">
    <subcellularLocation>
        <location evidence="4 5">Nucleus</location>
    </subcellularLocation>
</comment>
<comment type="similarity">
    <text evidence="7">Belongs to the CoREST family.</text>
</comment>
<keyword id="KW-0175">Coiled coil</keyword>
<keyword id="KW-1017">Isopeptide bond</keyword>
<keyword id="KW-0488">Methylation</keyword>
<keyword id="KW-0539">Nucleus</keyword>
<keyword id="KW-0597">Phosphoprotein</keyword>
<keyword id="KW-1185">Reference proteome</keyword>
<keyword id="KW-0677">Repeat</keyword>
<keyword id="KW-0678">Repressor</keyword>
<keyword id="KW-0804">Transcription</keyword>
<keyword id="KW-0805">Transcription regulation</keyword>
<keyword id="KW-0832">Ubl conjugation</keyword>
<gene>
    <name type="primary">Rcor2</name>
</gene>
<accession>Q5FWT8</accession>
<organism>
    <name type="scientific">Rattus norvegicus</name>
    <name type="common">Rat</name>
    <dbReference type="NCBI Taxonomy" id="10116"/>
    <lineage>
        <taxon>Eukaryota</taxon>
        <taxon>Metazoa</taxon>
        <taxon>Chordata</taxon>
        <taxon>Craniata</taxon>
        <taxon>Vertebrata</taxon>
        <taxon>Euteleostomi</taxon>
        <taxon>Mammalia</taxon>
        <taxon>Eutheria</taxon>
        <taxon>Euarchontoglires</taxon>
        <taxon>Glires</taxon>
        <taxon>Rodentia</taxon>
        <taxon>Myomorpha</taxon>
        <taxon>Muroidea</taxon>
        <taxon>Muridae</taxon>
        <taxon>Murinae</taxon>
        <taxon>Rattus</taxon>
    </lineage>
</organism>
<dbReference type="EMBL" id="BC089209">
    <property type="protein sequence ID" value="AAH89209.1"/>
    <property type="molecule type" value="mRNA"/>
</dbReference>
<dbReference type="RefSeq" id="NP_001014016.1">
    <property type="nucleotide sequence ID" value="NM_001013994.2"/>
</dbReference>
<dbReference type="RefSeq" id="XP_001061203.1">
    <property type="nucleotide sequence ID" value="XM_001061203.6"/>
</dbReference>
<dbReference type="RefSeq" id="XP_008758336.1">
    <property type="nucleotide sequence ID" value="XM_008760114.2"/>
</dbReference>
<dbReference type="RefSeq" id="XP_008758337.1">
    <property type="nucleotide sequence ID" value="XM_008760115.2"/>
</dbReference>
<dbReference type="RefSeq" id="XP_008768833.1">
    <property type="nucleotide sequence ID" value="XM_008770611.1"/>
</dbReference>
<dbReference type="RefSeq" id="XP_063144126.1">
    <property type="nucleotide sequence ID" value="XM_063288056.1"/>
</dbReference>
<dbReference type="SMR" id="Q5FWT8"/>
<dbReference type="FunCoup" id="Q5FWT8">
    <property type="interactions" value="750"/>
</dbReference>
<dbReference type="STRING" id="10116.ENSRNOP00000035978"/>
<dbReference type="iPTMnet" id="Q5FWT8"/>
<dbReference type="PhosphoSitePlus" id="Q5FWT8"/>
<dbReference type="PaxDb" id="10116-ENSRNOP00000035978"/>
<dbReference type="GeneID" id="305811"/>
<dbReference type="KEGG" id="rno:305811"/>
<dbReference type="UCSC" id="RGD:1359467">
    <property type="organism name" value="rat"/>
</dbReference>
<dbReference type="AGR" id="RGD:1359467"/>
<dbReference type="AGR" id="RGD:41118851"/>
<dbReference type="CTD" id="283248"/>
<dbReference type="RGD" id="1359467">
    <property type="gene designation" value="Rcor2"/>
</dbReference>
<dbReference type="VEuPathDB" id="HostDB:ENSRNOG00000060849"/>
<dbReference type="eggNOG" id="KOG1194">
    <property type="taxonomic scope" value="Eukaryota"/>
</dbReference>
<dbReference type="HOGENOM" id="CLU_026741_3_1_1"/>
<dbReference type="InParanoid" id="Q5FWT8"/>
<dbReference type="OrthoDB" id="10064338at2759"/>
<dbReference type="PhylomeDB" id="Q5FWT8"/>
<dbReference type="TreeFam" id="TF106450"/>
<dbReference type="PRO" id="PR:Q5FWT8"/>
<dbReference type="Proteomes" id="UP000002494">
    <property type="component" value="Chromosome 1"/>
</dbReference>
<dbReference type="Bgee" id="ENSRNOG00000021183">
    <property type="expression patterns" value="Expressed in heart and 18 other cell types or tissues"/>
</dbReference>
<dbReference type="GO" id="GO:0000785">
    <property type="term" value="C:chromatin"/>
    <property type="evidence" value="ECO:0000314"/>
    <property type="project" value="RGD"/>
</dbReference>
<dbReference type="GO" id="GO:0000118">
    <property type="term" value="C:histone deacetylase complex"/>
    <property type="evidence" value="ECO:0000318"/>
    <property type="project" value="GO_Central"/>
</dbReference>
<dbReference type="GO" id="GO:0005634">
    <property type="term" value="C:nucleus"/>
    <property type="evidence" value="ECO:0000266"/>
    <property type="project" value="RGD"/>
</dbReference>
<dbReference type="GO" id="GO:0005667">
    <property type="term" value="C:transcription regulator complex"/>
    <property type="evidence" value="ECO:0000318"/>
    <property type="project" value="GO_Central"/>
</dbReference>
<dbReference type="GO" id="GO:0019899">
    <property type="term" value="F:enzyme binding"/>
    <property type="evidence" value="ECO:0000266"/>
    <property type="project" value="RGD"/>
</dbReference>
<dbReference type="GO" id="GO:0003714">
    <property type="term" value="F:transcription corepressor activity"/>
    <property type="evidence" value="ECO:0000266"/>
    <property type="project" value="RGD"/>
</dbReference>
<dbReference type="GO" id="GO:0045892">
    <property type="term" value="P:negative regulation of DNA-templated transcription"/>
    <property type="evidence" value="ECO:0000315"/>
    <property type="project" value="RGD"/>
</dbReference>
<dbReference type="GO" id="GO:0006357">
    <property type="term" value="P:regulation of transcription by RNA polymerase II"/>
    <property type="evidence" value="ECO:0000318"/>
    <property type="project" value="GO_Central"/>
</dbReference>
<dbReference type="CDD" id="cd00167">
    <property type="entry name" value="SANT"/>
    <property type="match status" value="1"/>
</dbReference>
<dbReference type="FunFam" id="1.20.58.1880:FF:000001">
    <property type="entry name" value="REST corepressor 1"/>
    <property type="match status" value="1"/>
</dbReference>
<dbReference type="FunFam" id="1.10.10.60:FF:000033">
    <property type="entry name" value="REST corepressor 3"/>
    <property type="match status" value="1"/>
</dbReference>
<dbReference type="FunFam" id="4.10.1240.50:FF:000002">
    <property type="entry name" value="REST corepressor isoform X1"/>
    <property type="match status" value="1"/>
</dbReference>
<dbReference type="Gene3D" id="1.20.58.1880">
    <property type="match status" value="1"/>
</dbReference>
<dbReference type="Gene3D" id="4.10.1240.50">
    <property type="match status" value="1"/>
</dbReference>
<dbReference type="Gene3D" id="1.10.10.60">
    <property type="entry name" value="Homeodomain-like"/>
    <property type="match status" value="1"/>
</dbReference>
<dbReference type="InterPro" id="IPR000949">
    <property type="entry name" value="ELM2_dom"/>
</dbReference>
<dbReference type="InterPro" id="IPR009057">
    <property type="entry name" value="Homeodomain-like_sf"/>
</dbReference>
<dbReference type="InterPro" id="IPR049048">
    <property type="entry name" value="REST_helical"/>
</dbReference>
<dbReference type="InterPro" id="IPR001005">
    <property type="entry name" value="SANT/Myb"/>
</dbReference>
<dbReference type="InterPro" id="IPR017884">
    <property type="entry name" value="SANT_dom"/>
</dbReference>
<dbReference type="InterPro" id="IPR051066">
    <property type="entry name" value="Trans_reg/Corepressor"/>
</dbReference>
<dbReference type="PANTHER" id="PTHR16089:SF12">
    <property type="entry name" value="REST COREPRESSOR 2"/>
    <property type="match status" value="1"/>
</dbReference>
<dbReference type="PANTHER" id="PTHR16089">
    <property type="entry name" value="REST COREPRESSOR COREST PROTEIN-RELATED"/>
    <property type="match status" value="1"/>
</dbReference>
<dbReference type="Pfam" id="PF01448">
    <property type="entry name" value="ELM2"/>
    <property type="match status" value="1"/>
</dbReference>
<dbReference type="Pfam" id="PF00249">
    <property type="entry name" value="Myb_DNA-binding"/>
    <property type="match status" value="1"/>
</dbReference>
<dbReference type="Pfam" id="PF20878">
    <property type="entry name" value="REST_helical"/>
    <property type="match status" value="1"/>
</dbReference>
<dbReference type="SMART" id="SM01189">
    <property type="entry name" value="ELM2"/>
    <property type="match status" value="1"/>
</dbReference>
<dbReference type="SMART" id="SM00717">
    <property type="entry name" value="SANT"/>
    <property type="match status" value="2"/>
</dbReference>
<dbReference type="SUPFAM" id="SSF46689">
    <property type="entry name" value="Homeodomain-like"/>
    <property type="match status" value="2"/>
</dbReference>
<dbReference type="PROSITE" id="PS51156">
    <property type="entry name" value="ELM2"/>
    <property type="match status" value="1"/>
</dbReference>
<dbReference type="PROSITE" id="PS51293">
    <property type="entry name" value="SANT"/>
    <property type="match status" value="2"/>
</dbReference>
<protein>
    <recommendedName>
        <fullName>REST corepressor 2</fullName>
    </recommendedName>
</protein>
<reference key="1">
    <citation type="journal article" date="2004" name="Genome Res.">
        <title>The status, quality, and expansion of the NIH full-length cDNA project: the Mammalian Gene Collection (MGC).</title>
        <authorList>
            <consortium name="The MGC Project Team"/>
        </authorList>
    </citation>
    <scope>NUCLEOTIDE SEQUENCE [LARGE SCALE MRNA]</scope>
    <source>
        <tissue>Ovary</tissue>
    </source>
</reference>
<reference key="2">
    <citation type="journal article" date="2012" name="Nat. Commun.">
        <title>Quantitative maps of protein phosphorylation sites across 14 different rat organs and tissues.</title>
        <authorList>
            <person name="Lundby A."/>
            <person name="Secher A."/>
            <person name="Lage K."/>
            <person name="Nordsborg N.B."/>
            <person name="Dmytriyev A."/>
            <person name="Lundby C."/>
            <person name="Olsen J.V."/>
        </authorList>
    </citation>
    <scope>PHOSPHORYLATION [LARGE SCALE ANALYSIS] AT SER-202</scope>
    <scope>IDENTIFICATION BY MASS SPECTROMETRY [LARGE SCALE ANALYSIS]</scope>
</reference>
<proteinExistence type="evidence at protein level"/>
<evidence type="ECO:0000250" key="1">
    <source>
        <dbReference type="UniProtKB" id="Q8C796"/>
    </source>
</evidence>
<evidence type="ECO:0000250" key="2">
    <source>
        <dbReference type="UniProtKB" id="Q8IZ40"/>
    </source>
</evidence>
<evidence type="ECO:0000255" key="3"/>
<evidence type="ECO:0000255" key="4">
    <source>
        <dbReference type="PROSITE-ProRule" id="PRU00512"/>
    </source>
</evidence>
<evidence type="ECO:0000255" key="5">
    <source>
        <dbReference type="PROSITE-ProRule" id="PRU00624"/>
    </source>
</evidence>
<evidence type="ECO:0000256" key="6">
    <source>
        <dbReference type="SAM" id="MobiDB-lite"/>
    </source>
</evidence>
<evidence type="ECO:0000305" key="7"/>
<evidence type="ECO:0007744" key="8">
    <source>
    </source>
</evidence>
<name>RCOR2_RAT</name>
<sequence length="523" mass="57981">MPSVMEKPSAGSGILSRSRAKTAPNGGQPHSEDDSSEEEHSHDSMIRVGTNYQAVIPECKPESPARYSNKELKGMLVWSPNHCVSDAKLDKYIAMAKEKHGYNIEQALGMLLWHKHDVEKSLADLANFTPFPDEWTVEDKVLFEQAFGFHGKCFQRIQQMLPDKLIPSLVKYYYSWKKTRSRTSVMDRQARRLGGRKDKEDSDELEEGRGAVSEGEPDTGDPKREPLPSRPLNARPGPGKKEIQVSQYRHHPLRTRRRPPKGMYLSPEGLTAVSGSPDLANLTLRGLDSQLISLKRQVQSMKQTNSSLRQALEGGIDPLRPPEANTKFNSRWTTDEQLLAVQAIRRYGKDFGAIAEVIGNKTLTQVKTFFVSYRRRFNLEEVLQEWEAEQDGAPTAPVPVEEARRGAPVPATALEEDDEVQITSVSTSVPRSVPPAPPPPPPPTSLSQPPPLLRPPLPTAPTLLRQPPPLQQGRFLQPRLAPNQPPPPLIRPALAASRHSARPGPQPPPTLVGAQLEPPAPSL</sequence>